<gene>
    <name type="primary">MT-CYB</name>
    <name type="synonym">COB</name>
    <name type="synonym">CYTB</name>
    <name type="synonym">MTCYB</name>
</gene>
<name>CYB_PHACI</name>
<reference key="1">
    <citation type="journal article" date="1999" name="J. Mammal. Evol.">
        <title>An analysis of marsupial interordinal relationships based on 12S rRNA, tRNA valine, 16S rRNA, and cytochrome b sequences.</title>
        <authorList>
            <person name="Burk A."/>
            <person name="Westerman M."/>
            <person name="Kao D.J."/>
            <person name="Kavanagh J.R."/>
            <person name="Springer M.S."/>
        </authorList>
    </citation>
    <scope>NUCLEOTIDE SEQUENCE [GENOMIC DNA]</scope>
</reference>
<accession>Q9TEU7</accession>
<proteinExistence type="inferred from homology"/>
<protein>
    <recommendedName>
        <fullName>Cytochrome b</fullName>
    </recommendedName>
    <alternativeName>
        <fullName>Complex III subunit 3</fullName>
    </alternativeName>
    <alternativeName>
        <fullName>Complex III subunit III</fullName>
    </alternativeName>
    <alternativeName>
        <fullName>Cytochrome b-c1 complex subunit 3</fullName>
    </alternativeName>
    <alternativeName>
        <fullName>Ubiquinol-cytochrome-c reductase complex cytochrome b subunit</fullName>
    </alternativeName>
</protein>
<comment type="function">
    <text evidence="2">Component of the ubiquinol-cytochrome c reductase complex (complex III or cytochrome b-c1 complex) that is part of the mitochondrial respiratory chain. The b-c1 complex mediates electron transfer from ubiquinol to cytochrome c. Contributes to the generation of a proton gradient across the mitochondrial membrane that is then used for ATP synthesis.</text>
</comment>
<comment type="cofactor">
    <cofactor evidence="2">
        <name>heme b</name>
        <dbReference type="ChEBI" id="CHEBI:60344"/>
    </cofactor>
    <text evidence="2">Binds 2 heme b groups non-covalently.</text>
</comment>
<comment type="subunit">
    <text evidence="2">The cytochrome bc1 complex contains 11 subunits: 3 respiratory subunits (MT-CYB, CYC1 and UQCRFS1), 2 core proteins (UQCRC1 and UQCRC2) and 6 low-molecular weight proteins (UQCRH/QCR6, UQCRB/QCR7, UQCRQ/QCR8, UQCR10/QCR9, UQCR11/QCR10 and a cleavage product of UQCRFS1). This cytochrome bc1 complex then forms a dimer.</text>
</comment>
<comment type="subcellular location">
    <subcellularLocation>
        <location evidence="2">Mitochondrion inner membrane</location>
        <topology evidence="2">Multi-pass membrane protein</topology>
    </subcellularLocation>
</comment>
<comment type="miscellaneous">
    <text evidence="1">Heme 1 (or BL or b562) is low-potential and absorbs at about 562 nm, and heme 2 (or BH or b566) is high-potential and absorbs at about 566 nm.</text>
</comment>
<comment type="similarity">
    <text evidence="3 4">Belongs to the cytochrome b family.</text>
</comment>
<comment type="caution">
    <text evidence="2">The full-length protein contains only eight transmembrane helices, not nine as predicted by bioinformatics tools.</text>
</comment>
<geneLocation type="mitochondrion"/>
<evidence type="ECO:0000250" key="1"/>
<evidence type="ECO:0000250" key="2">
    <source>
        <dbReference type="UniProtKB" id="P00157"/>
    </source>
</evidence>
<evidence type="ECO:0000255" key="3">
    <source>
        <dbReference type="PROSITE-ProRule" id="PRU00967"/>
    </source>
</evidence>
<evidence type="ECO:0000255" key="4">
    <source>
        <dbReference type="PROSITE-ProRule" id="PRU00968"/>
    </source>
</evidence>
<dbReference type="EMBL" id="AF166348">
    <property type="protein sequence ID" value="AAD45812.1"/>
    <property type="molecule type" value="Genomic_DNA"/>
</dbReference>
<dbReference type="SMR" id="Q9TEU7"/>
<dbReference type="Proteomes" id="UP000515140">
    <property type="component" value="Mitochondrion MT"/>
</dbReference>
<dbReference type="GO" id="GO:0005743">
    <property type="term" value="C:mitochondrial inner membrane"/>
    <property type="evidence" value="ECO:0007669"/>
    <property type="project" value="UniProtKB-SubCell"/>
</dbReference>
<dbReference type="GO" id="GO:0045275">
    <property type="term" value="C:respiratory chain complex III"/>
    <property type="evidence" value="ECO:0007669"/>
    <property type="project" value="InterPro"/>
</dbReference>
<dbReference type="GO" id="GO:0046872">
    <property type="term" value="F:metal ion binding"/>
    <property type="evidence" value="ECO:0007669"/>
    <property type="project" value="UniProtKB-KW"/>
</dbReference>
<dbReference type="GO" id="GO:0008121">
    <property type="term" value="F:ubiquinol-cytochrome-c reductase activity"/>
    <property type="evidence" value="ECO:0007669"/>
    <property type="project" value="InterPro"/>
</dbReference>
<dbReference type="GO" id="GO:0006122">
    <property type="term" value="P:mitochondrial electron transport, ubiquinol to cytochrome c"/>
    <property type="evidence" value="ECO:0007669"/>
    <property type="project" value="TreeGrafter"/>
</dbReference>
<dbReference type="CDD" id="cd00290">
    <property type="entry name" value="cytochrome_b_C"/>
    <property type="match status" value="1"/>
</dbReference>
<dbReference type="CDD" id="cd00284">
    <property type="entry name" value="Cytochrome_b_N"/>
    <property type="match status" value="1"/>
</dbReference>
<dbReference type="FunFam" id="1.20.810.10:FF:000002">
    <property type="entry name" value="Cytochrome b"/>
    <property type="match status" value="1"/>
</dbReference>
<dbReference type="Gene3D" id="1.20.810.10">
    <property type="entry name" value="Cytochrome Bc1 Complex, Chain C"/>
    <property type="match status" value="1"/>
</dbReference>
<dbReference type="InterPro" id="IPR005798">
    <property type="entry name" value="Cyt_b/b6_C"/>
</dbReference>
<dbReference type="InterPro" id="IPR036150">
    <property type="entry name" value="Cyt_b/b6_C_sf"/>
</dbReference>
<dbReference type="InterPro" id="IPR005797">
    <property type="entry name" value="Cyt_b/b6_N"/>
</dbReference>
<dbReference type="InterPro" id="IPR027387">
    <property type="entry name" value="Cytb/b6-like_sf"/>
</dbReference>
<dbReference type="InterPro" id="IPR030689">
    <property type="entry name" value="Cytochrome_b"/>
</dbReference>
<dbReference type="InterPro" id="IPR048260">
    <property type="entry name" value="Cytochrome_b_C_euk/bac"/>
</dbReference>
<dbReference type="InterPro" id="IPR048259">
    <property type="entry name" value="Cytochrome_b_N_euk/bac"/>
</dbReference>
<dbReference type="InterPro" id="IPR016174">
    <property type="entry name" value="Di-haem_cyt_TM"/>
</dbReference>
<dbReference type="PANTHER" id="PTHR19271">
    <property type="entry name" value="CYTOCHROME B"/>
    <property type="match status" value="1"/>
</dbReference>
<dbReference type="PANTHER" id="PTHR19271:SF16">
    <property type="entry name" value="CYTOCHROME B"/>
    <property type="match status" value="1"/>
</dbReference>
<dbReference type="Pfam" id="PF00032">
    <property type="entry name" value="Cytochrom_B_C"/>
    <property type="match status" value="1"/>
</dbReference>
<dbReference type="Pfam" id="PF00033">
    <property type="entry name" value="Cytochrome_B"/>
    <property type="match status" value="1"/>
</dbReference>
<dbReference type="PIRSF" id="PIRSF038885">
    <property type="entry name" value="COB"/>
    <property type="match status" value="1"/>
</dbReference>
<dbReference type="SUPFAM" id="SSF81648">
    <property type="entry name" value="a domain/subunit of cytochrome bc1 complex (Ubiquinol-cytochrome c reductase)"/>
    <property type="match status" value="1"/>
</dbReference>
<dbReference type="SUPFAM" id="SSF81342">
    <property type="entry name" value="Transmembrane di-heme cytochromes"/>
    <property type="match status" value="1"/>
</dbReference>
<dbReference type="PROSITE" id="PS51003">
    <property type="entry name" value="CYTB_CTER"/>
    <property type="match status" value="1"/>
</dbReference>
<dbReference type="PROSITE" id="PS51002">
    <property type="entry name" value="CYTB_NTER"/>
    <property type="match status" value="1"/>
</dbReference>
<keyword id="KW-0249">Electron transport</keyword>
<keyword id="KW-0349">Heme</keyword>
<keyword id="KW-0408">Iron</keyword>
<keyword id="KW-0472">Membrane</keyword>
<keyword id="KW-0479">Metal-binding</keyword>
<keyword id="KW-0496">Mitochondrion</keyword>
<keyword id="KW-0999">Mitochondrion inner membrane</keyword>
<keyword id="KW-1185">Reference proteome</keyword>
<keyword id="KW-0679">Respiratory chain</keyword>
<keyword id="KW-0812">Transmembrane</keyword>
<keyword id="KW-1133">Transmembrane helix</keyword>
<keyword id="KW-0813">Transport</keyword>
<keyword id="KW-0830">Ubiquinone</keyword>
<organism>
    <name type="scientific">Phascolarctos cinereus</name>
    <name type="common">Koala</name>
    <dbReference type="NCBI Taxonomy" id="38626"/>
    <lineage>
        <taxon>Eukaryota</taxon>
        <taxon>Metazoa</taxon>
        <taxon>Chordata</taxon>
        <taxon>Craniata</taxon>
        <taxon>Vertebrata</taxon>
        <taxon>Euteleostomi</taxon>
        <taxon>Mammalia</taxon>
        <taxon>Metatheria</taxon>
        <taxon>Diprotodontia</taxon>
        <taxon>Phascolarctidae</taxon>
        <taxon>Phascolarctos</taxon>
    </lineage>
</organism>
<sequence>MTNLRKTYPIIKIINQPFIDLPAPSNILAWWNFGSLLGMCLMIQIITGLFLAMHYTPDTSTAFSSVAHICREVNYGWLIRNLHANGASVFFMCLYLHIGRGIYYGSYLYKETWNIGVILLLMTMMTALINYVLPWGQMSFWGATVITNLLSAIPYIGTTLVEWIWGGFSVDKATLTRFFAFHFILPFIITAMVIVHLLFLHETGSNNPSGINPDSDKIPFHPYYTIKDALGLALMLLILLLLALFSPDMLSDPDNFSPANPLNTPQHIKPEWYFLFAYAILRSIPNKLGGVLALLASILILFMMPLLHTSKQRSLTFRPISQTLFWILVANLITLTWIGGQPVEQPFIIIGQVASISYFLLIIILMPLAGLFENYMLEPKW</sequence>
<feature type="chain" id="PRO_0000061381" description="Cytochrome b">
    <location>
        <begin position="1"/>
        <end position="381"/>
    </location>
</feature>
<feature type="transmembrane region" description="Helical" evidence="2">
    <location>
        <begin position="33"/>
        <end position="53"/>
    </location>
</feature>
<feature type="transmembrane region" description="Helical" evidence="2">
    <location>
        <begin position="77"/>
        <end position="98"/>
    </location>
</feature>
<feature type="transmembrane region" description="Helical" evidence="2">
    <location>
        <begin position="113"/>
        <end position="133"/>
    </location>
</feature>
<feature type="transmembrane region" description="Helical" evidence="2">
    <location>
        <begin position="178"/>
        <end position="198"/>
    </location>
</feature>
<feature type="transmembrane region" description="Helical" evidence="2">
    <location>
        <begin position="226"/>
        <end position="246"/>
    </location>
</feature>
<feature type="transmembrane region" description="Helical" evidence="2">
    <location>
        <begin position="288"/>
        <end position="308"/>
    </location>
</feature>
<feature type="transmembrane region" description="Helical" evidence="2">
    <location>
        <begin position="320"/>
        <end position="340"/>
    </location>
</feature>
<feature type="transmembrane region" description="Helical" evidence="2">
    <location>
        <begin position="347"/>
        <end position="367"/>
    </location>
</feature>
<feature type="binding site" description="axial binding residue" evidence="2">
    <location>
        <position position="83"/>
    </location>
    <ligand>
        <name>heme b</name>
        <dbReference type="ChEBI" id="CHEBI:60344"/>
        <label>b562</label>
    </ligand>
    <ligandPart>
        <name>Fe</name>
        <dbReference type="ChEBI" id="CHEBI:18248"/>
    </ligandPart>
</feature>
<feature type="binding site" description="axial binding residue" evidence="2">
    <location>
        <position position="97"/>
    </location>
    <ligand>
        <name>heme b</name>
        <dbReference type="ChEBI" id="CHEBI:60344"/>
        <label>b566</label>
    </ligand>
    <ligandPart>
        <name>Fe</name>
        <dbReference type="ChEBI" id="CHEBI:18248"/>
    </ligandPart>
</feature>
<feature type="binding site" description="axial binding residue" evidence="2">
    <location>
        <position position="182"/>
    </location>
    <ligand>
        <name>heme b</name>
        <dbReference type="ChEBI" id="CHEBI:60344"/>
        <label>b562</label>
    </ligand>
    <ligandPart>
        <name>Fe</name>
        <dbReference type="ChEBI" id="CHEBI:18248"/>
    </ligandPart>
</feature>
<feature type="binding site" description="axial binding residue" evidence="2">
    <location>
        <position position="196"/>
    </location>
    <ligand>
        <name>heme b</name>
        <dbReference type="ChEBI" id="CHEBI:60344"/>
        <label>b566</label>
    </ligand>
    <ligandPart>
        <name>Fe</name>
        <dbReference type="ChEBI" id="CHEBI:18248"/>
    </ligandPart>
</feature>
<feature type="binding site" evidence="2">
    <location>
        <position position="201"/>
    </location>
    <ligand>
        <name>a ubiquinone</name>
        <dbReference type="ChEBI" id="CHEBI:16389"/>
    </ligand>
</feature>